<sequence>MPAAAGDGLSESPSRFLAGEKPPVHLEETFLPACISNVSRETLRNFQHTKRVGSYLIGRKLGEGSFAKVREGLHVVTGEKVAIKVIDKKKAKKDTYVTKNLRREGQIQQMIRHPNITQLLDILETENSYYLVMELCPGGNLMHKIYEKKRLEEHEARKYIRQLILAVEHLHRAGVVHRDLKIENLLLDENNNIKLIDFGLSNCAGILGYSDPFSTQCGSPAYAAPELLARKKYGPKVDVWSIGVNMYAMLTGTLPFTVEPFSLRALYQKMVDKDMNPLPTHLSPAAISFLRSLLEPDPLKRPNIQQALANRWLNDNYHGKGLHTYPNRIHLEDLSQSVVLHMSEKLGYKHSDVINVILSNRACHTLAVYFLLNRKLEHYLVNMRKPDINDNVCHKNQFHQLEKYKMNKNSYEERRSKDLEKRGEPQQRPIQRKLDKCSPSHRQNACLTPQGHSNKGPVKERRSSKSERESFGGLSPFHEVRITKTGCMTSCSLEYLEMQSPDPRTPKIMRRQDSHSQETVNVNMGSRIRETHLNVVRSFESVNREDQIESLSPNHQYRVIGSPVSFSPRHSSERTLSPIFQFDNTSPSKSHFNQASFTYDDKSSPSSPESMSPTSPHSPSCNNNISGNLGSPNCVRSRGRFPMMGIGQMLRKRNQVVSPKGEKPLETRMPPLHQMSPGYASFNSSDMNGFC</sequence>
<proteinExistence type="evidence at transcript level"/>
<comment type="catalytic activity">
    <reaction evidence="2">
        <text>L-seryl-[protein] + ATP = O-phospho-L-seryl-[protein] + ADP + H(+)</text>
        <dbReference type="Rhea" id="RHEA:17989"/>
        <dbReference type="Rhea" id="RHEA-COMP:9863"/>
        <dbReference type="Rhea" id="RHEA-COMP:11604"/>
        <dbReference type="ChEBI" id="CHEBI:15378"/>
        <dbReference type="ChEBI" id="CHEBI:29999"/>
        <dbReference type="ChEBI" id="CHEBI:30616"/>
        <dbReference type="ChEBI" id="CHEBI:83421"/>
        <dbReference type="ChEBI" id="CHEBI:456216"/>
        <dbReference type="EC" id="2.7.11.1"/>
    </reaction>
</comment>
<comment type="catalytic activity">
    <reaction evidence="2">
        <text>L-threonyl-[protein] + ATP = O-phospho-L-threonyl-[protein] + ADP + H(+)</text>
        <dbReference type="Rhea" id="RHEA:46608"/>
        <dbReference type="Rhea" id="RHEA-COMP:11060"/>
        <dbReference type="Rhea" id="RHEA-COMP:11605"/>
        <dbReference type="ChEBI" id="CHEBI:15378"/>
        <dbReference type="ChEBI" id="CHEBI:30013"/>
        <dbReference type="ChEBI" id="CHEBI:30616"/>
        <dbReference type="ChEBI" id="CHEBI:61977"/>
        <dbReference type="ChEBI" id="CHEBI:456216"/>
        <dbReference type="EC" id="2.7.11.1"/>
    </reaction>
</comment>
<comment type="similarity">
    <text evidence="3">Belongs to the protein kinase superfamily. CAMK Ser/Thr protein kinase family. SNF1 subfamily.</text>
</comment>
<reference evidence="9" key="1">
    <citation type="journal article" date="2004" name="Dev. Genes Evol.">
        <title>Cloning and developmental expression of MARK/Par-1/MELK-related protein kinase xMAK-V in Xenopus laevis.</title>
        <authorList>
            <person name="Ruzov A.S."/>
            <person name="Mertsalov I.B."/>
            <person name="Meehan R."/>
            <person name="Kiselev S.L."/>
            <person name="Buchman V.L."/>
            <person name="Korobko I.V."/>
        </authorList>
    </citation>
    <scope>NUCLEOTIDE SEQUENCE [MRNA]</scope>
</reference>
<reference evidence="8" key="2">
    <citation type="submission" date="2004-10" db="EMBL/GenBank/DDBJ databases">
        <authorList>
            <consortium name="NIH - Xenopus Gene Collection (XGC) project"/>
        </authorList>
    </citation>
    <scope>NUCLEOTIDE SEQUENCE [LARGE SCALE MRNA]</scope>
    <source>
        <tissue evidence="8">Gastrula</tissue>
    </source>
</reference>
<dbReference type="EC" id="2.7.11.1"/>
<dbReference type="EMBL" id="AY318877">
    <property type="protein sequence ID" value="AAQ85059.1"/>
    <property type="molecule type" value="mRNA"/>
</dbReference>
<dbReference type="EMBL" id="BC084068">
    <property type="protein sequence ID" value="AAH84068.1"/>
    <property type="molecule type" value="mRNA"/>
</dbReference>
<dbReference type="RefSeq" id="NP_001084712.1">
    <property type="nucleotide sequence ID" value="NM_001091243.1"/>
</dbReference>
<dbReference type="SMR" id="Q5XHI9"/>
<dbReference type="DNASU" id="414676"/>
<dbReference type="GeneID" id="414676"/>
<dbReference type="KEGG" id="xla:414676"/>
<dbReference type="AGR" id="Xenbase:XB-GENE-968421"/>
<dbReference type="CTD" id="414676"/>
<dbReference type="Xenbase" id="XB-GENE-968421">
    <property type="gene designation" value="hunk.L"/>
</dbReference>
<dbReference type="OrthoDB" id="193931at2759"/>
<dbReference type="Proteomes" id="UP000186698">
    <property type="component" value="Chromosome 2L"/>
</dbReference>
<dbReference type="Bgee" id="414676">
    <property type="expression patterns" value="Expressed in gastrula and 11 other cell types or tissues"/>
</dbReference>
<dbReference type="GO" id="GO:0005737">
    <property type="term" value="C:cytoplasm"/>
    <property type="evidence" value="ECO:0000318"/>
    <property type="project" value="GO_Central"/>
</dbReference>
<dbReference type="GO" id="GO:0005524">
    <property type="term" value="F:ATP binding"/>
    <property type="evidence" value="ECO:0007669"/>
    <property type="project" value="UniProtKB-KW"/>
</dbReference>
<dbReference type="GO" id="GO:0106310">
    <property type="term" value="F:protein serine kinase activity"/>
    <property type="evidence" value="ECO:0007669"/>
    <property type="project" value="RHEA"/>
</dbReference>
<dbReference type="GO" id="GO:0004674">
    <property type="term" value="F:protein serine/threonine kinase activity"/>
    <property type="evidence" value="ECO:0000318"/>
    <property type="project" value="GO_Central"/>
</dbReference>
<dbReference type="GO" id="GO:0035556">
    <property type="term" value="P:intracellular signal transduction"/>
    <property type="evidence" value="ECO:0000318"/>
    <property type="project" value="GO_Central"/>
</dbReference>
<dbReference type="FunFam" id="1.10.510.10:FF:000391">
    <property type="entry name" value="Hormonally up-regulated neu tumor-associated kinase"/>
    <property type="match status" value="1"/>
</dbReference>
<dbReference type="FunFam" id="3.30.200.20:FF:000003">
    <property type="entry name" value="Non-specific serine/threonine protein kinase"/>
    <property type="match status" value="1"/>
</dbReference>
<dbReference type="Gene3D" id="1.10.510.10">
    <property type="entry name" value="Transferase(Phosphotransferase) domain 1"/>
    <property type="match status" value="1"/>
</dbReference>
<dbReference type="InterPro" id="IPR011009">
    <property type="entry name" value="Kinase-like_dom_sf"/>
</dbReference>
<dbReference type="InterPro" id="IPR000719">
    <property type="entry name" value="Prot_kinase_dom"/>
</dbReference>
<dbReference type="InterPro" id="IPR017441">
    <property type="entry name" value="Protein_kinase_ATP_BS"/>
</dbReference>
<dbReference type="InterPro" id="IPR008271">
    <property type="entry name" value="Ser/Thr_kinase_AS"/>
</dbReference>
<dbReference type="PANTHER" id="PTHR24346:SF80">
    <property type="entry name" value="HORMONALLY UP-REGULATED NEU TUMOR-ASSOCIATED KINASE"/>
    <property type="match status" value="1"/>
</dbReference>
<dbReference type="PANTHER" id="PTHR24346">
    <property type="entry name" value="MAP/MICROTUBULE AFFINITY-REGULATING KINASE"/>
    <property type="match status" value="1"/>
</dbReference>
<dbReference type="Pfam" id="PF00069">
    <property type="entry name" value="Pkinase"/>
    <property type="match status" value="1"/>
</dbReference>
<dbReference type="SMART" id="SM00220">
    <property type="entry name" value="S_TKc"/>
    <property type="match status" value="1"/>
</dbReference>
<dbReference type="SUPFAM" id="SSF56112">
    <property type="entry name" value="Protein kinase-like (PK-like)"/>
    <property type="match status" value="1"/>
</dbReference>
<dbReference type="PROSITE" id="PS00107">
    <property type="entry name" value="PROTEIN_KINASE_ATP"/>
    <property type="match status" value="1"/>
</dbReference>
<dbReference type="PROSITE" id="PS50011">
    <property type="entry name" value="PROTEIN_KINASE_DOM"/>
    <property type="match status" value="1"/>
</dbReference>
<dbReference type="PROSITE" id="PS00108">
    <property type="entry name" value="PROTEIN_KINASE_ST"/>
    <property type="match status" value="1"/>
</dbReference>
<gene>
    <name type="primary">hunk-a</name>
    <name type="synonym">makv-a</name>
</gene>
<evidence type="ECO:0000250" key="1">
    <source>
        <dbReference type="UniProtKB" id="P00517"/>
    </source>
</evidence>
<evidence type="ECO:0000250" key="2">
    <source>
        <dbReference type="UniProtKB" id="P57058"/>
    </source>
</evidence>
<evidence type="ECO:0000255" key="3"/>
<evidence type="ECO:0000255" key="4">
    <source>
        <dbReference type="PROSITE-ProRule" id="PRU00159"/>
    </source>
</evidence>
<evidence type="ECO:0000255" key="5">
    <source>
        <dbReference type="PROSITE-ProRule" id="PRU10027"/>
    </source>
</evidence>
<evidence type="ECO:0000256" key="6">
    <source>
        <dbReference type="SAM" id="MobiDB-lite"/>
    </source>
</evidence>
<evidence type="ECO:0000305" key="7"/>
<evidence type="ECO:0000312" key="8">
    <source>
        <dbReference type="EMBL" id="AAH84068.1"/>
    </source>
</evidence>
<evidence type="ECO:0000312" key="9">
    <source>
        <dbReference type="EMBL" id="AAQ85059.1"/>
    </source>
</evidence>
<name>HUNKA_XENLA</name>
<feature type="chain" id="PRO_0000347328" description="Hormonally up-regulated neu tumor-associated kinase homolog A">
    <location>
        <begin position="1"/>
        <end position="691"/>
    </location>
</feature>
<feature type="domain" description="Protein kinase" evidence="4">
    <location>
        <begin position="55"/>
        <end position="313"/>
    </location>
</feature>
<feature type="region of interest" description="Disordered" evidence="6">
    <location>
        <begin position="406"/>
        <end position="475"/>
    </location>
</feature>
<feature type="region of interest" description="Disordered" evidence="6">
    <location>
        <begin position="499"/>
        <end position="518"/>
    </location>
</feature>
<feature type="region of interest" description="Disordered" evidence="6">
    <location>
        <begin position="580"/>
        <end position="640"/>
    </location>
</feature>
<feature type="region of interest" description="Disordered" evidence="6">
    <location>
        <begin position="655"/>
        <end position="679"/>
    </location>
</feature>
<feature type="compositionally biased region" description="Basic and acidic residues" evidence="6">
    <location>
        <begin position="406"/>
        <end position="425"/>
    </location>
</feature>
<feature type="compositionally biased region" description="Polar residues" evidence="6">
    <location>
        <begin position="440"/>
        <end position="453"/>
    </location>
</feature>
<feature type="compositionally biased region" description="Basic and acidic residues" evidence="6">
    <location>
        <begin position="457"/>
        <end position="470"/>
    </location>
</feature>
<feature type="compositionally biased region" description="Polar residues" evidence="6">
    <location>
        <begin position="582"/>
        <end position="597"/>
    </location>
</feature>
<feature type="compositionally biased region" description="Low complexity" evidence="6">
    <location>
        <begin position="604"/>
        <end position="620"/>
    </location>
</feature>
<feature type="compositionally biased region" description="Polar residues" evidence="6">
    <location>
        <begin position="621"/>
        <end position="631"/>
    </location>
</feature>
<feature type="active site" description="Proton acceptor" evidence="1 4 5">
    <location>
        <position position="179"/>
    </location>
</feature>
<feature type="binding site" evidence="1 4">
    <location>
        <begin position="61"/>
        <end position="69"/>
    </location>
    <ligand>
        <name>ATP</name>
        <dbReference type="ChEBI" id="CHEBI:30616"/>
    </ligand>
</feature>
<feature type="binding site" evidence="1 4">
    <location>
        <position position="84"/>
    </location>
    <ligand>
        <name>ATP</name>
        <dbReference type="ChEBI" id="CHEBI:30616"/>
    </ligand>
</feature>
<feature type="sequence conflict" description="In Ref. 1; AAQ85059." evidence="7" ref="1">
    <original>P</original>
    <variation>A</variation>
    <location>
        <position position="279"/>
    </location>
</feature>
<feature type="sequence conflict" description="In Ref. 1; AAQ85059." evidence="7" ref="1">
    <original>A</original>
    <variation>G</variation>
    <location>
        <position position="286"/>
    </location>
</feature>
<organism>
    <name type="scientific">Xenopus laevis</name>
    <name type="common">African clawed frog</name>
    <dbReference type="NCBI Taxonomy" id="8355"/>
    <lineage>
        <taxon>Eukaryota</taxon>
        <taxon>Metazoa</taxon>
        <taxon>Chordata</taxon>
        <taxon>Craniata</taxon>
        <taxon>Vertebrata</taxon>
        <taxon>Euteleostomi</taxon>
        <taxon>Amphibia</taxon>
        <taxon>Batrachia</taxon>
        <taxon>Anura</taxon>
        <taxon>Pipoidea</taxon>
        <taxon>Pipidae</taxon>
        <taxon>Xenopodinae</taxon>
        <taxon>Xenopus</taxon>
        <taxon>Xenopus</taxon>
    </lineage>
</organism>
<accession>Q5XHI9</accession>
<accession>Q6VZ18</accession>
<keyword id="KW-0067">ATP-binding</keyword>
<keyword id="KW-0418">Kinase</keyword>
<keyword id="KW-0547">Nucleotide-binding</keyword>
<keyword id="KW-1185">Reference proteome</keyword>
<keyword id="KW-0723">Serine/threonine-protein kinase</keyword>
<keyword id="KW-0808">Transferase</keyword>
<protein>
    <recommendedName>
        <fullName>Hormonally up-regulated neu tumor-associated kinase homolog A</fullName>
        <ecNumber>2.7.11.1</ecNumber>
    </recommendedName>
    <alternativeName>
        <fullName>Serine/threonine-protein kinase MAK-V A</fullName>
        <shortName>xMAK-V A</shortName>
    </alternativeName>
</protein>